<proteinExistence type="evidence at protein level"/>
<evidence type="ECO:0000250" key="1">
    <source>
        <dbReference type="UniProtKB" id="Q9H1K4"/>
    </source>
</evidence>
<evidence type="ECO:0000255" key="2"/>
<evidence type="ECO:0000255" key="3">
    <source>
        <dbReference type="PROSITE-ProRule" id="PRU00282"/>
    </source>
</evidence>
<evidence type="ECO:0000269" key="4">
    <source>
    </source>
</evidence>
<evidence type="ECO:0000305" key="5"/>
<keyword id="KW-0025">Alternative splicing</keyword>
<keyword id="KW-0472">Membrane</keyword>
<keyword id="KW-0496">Mitochondrion</keyword>
<keyword id="KW-0999">Mitochondrion inner membrane</keyword>
<keyword id="KW-0597">Phosphoprotein</keyword>
<keyword id="KW-1185">Reference proteome</keyword>
<keyword id="KW-0677">Repeat</keyword>
<keyword id="KW-0769">Symport</keyword>
<keyword id="KW-0812">Transmembrane</keyword>
<keyword id="KW-1133">Transmembrane helix</keyword>
<keyword id="KW-0813">Transport</keyword>
<name>GHC2_MOUSE</name>
<comment type="function">
    <text evidence="1">Responsible for the transport of glutamate from the cytosol into the mitochondrial matrix with the concomitant import of a proton (symport system).</text>
</comment>
<comment type="catalytic activity">
    <reaction evidence="1">
        <text>L-glutamate(in) + H(+)(in) = L-glutamate(out) + H(+)(out)</text>
        <dbReference type="Rhea" id="RHEA:70955"/>
        <dbReference type="ChEBI" id="CHEBI:15378"/>
        <dbReference type="ChEBI" id="CHEBI:29985"/>
    </reaction>
</comment>
<comment type="subcellular location">
    <subcellularLocation>
        <location evidence="4">Mitochondrion inner membrane</location>
        <topology evidence="2">Multi-pass membrane protein</topology>
    </subcellularLocation>
</comment>
<comment type="alternative products">
    <event type="alternative splicing"/>
    <isoform>
        <id>Q9DB41-1</id>
        <name>1</name>
        <sequence type="displayed"/>
    </isoform>
    <isoform>
        <id>Q9DB41-2</id>
        <name>2</name>
        <sequence type="described" ref="VSP_022262"/>
    </isoform>
</comment>
<comment type="miscellaneous">
    <molecule>Isoform 2</molecule>
    <text evidence="5">Incomplete sequence.</text>
</comment>
<comment type="similarity">
    <text evidence="5">Belongs to the mitochondrial carrier (TC 2.A.29) family.</text>
</comment>
<feature type="chain" id="PRO_0000090622" description="Mitochondrial glutamate carrier 2">
    <location>
        <begin position="1"/>
        <end position="320"/>
    </location>
</feature>
<feature type="transmembrane region" description="Helical; Name=1" evidence="2">
    <location>
        <begin position="17"/>
        <end position="37"/>
    </location>
</feature>
<feature type="transmembrane region" description="Helical; Name=2" evidence="2">
    <location>
        <begin position="66"/>
        <end position="86"/>
    </location>
</feature>
<feature type="transmembrane region" description="Helical; Name=3" evidence="2">
    <location>
        <begin position="110"/>
        <end position="128"/>
    </location>
</feature>
<feature type="transmembrane region" description="Helical; Name=4" evidence="2">
    <location>
        <begin position="190"/>
        <end position="210"/>
    </location>
</feature>
<feature type="transmembrane region" description="Helical; Name=5" evidence="2">
    <location>
        <begin position="230"/>
        <end position="250"/>
    </location>
</feature>
<feature type="transmembrane region" description="Helical; Name=6" evidence="2">
    <location>
        <begin position="293"/>
        <end position="313"/>
    </location>
</feature>
<feature type="repeat" description="Solcar 1" evidence="3">
    <location>
        <begin position="11"/>
        <end position="97"/>
    </location>
</feature>
<feature type="repeat" description="Solcar 2" evidence="3">
    <location>
        <begin position="105"/>
        <end position="215"/>
    </location>
</feature>
<feature type="repeat" description="Solcar 3" evidence="3">
    <location>
        <begin position="224"/>
        <end position="313"/>
    </location>
</feature>
<feature type="modified residue" description="Phosphoserine" evidence="1">
    <location>
        <position position="150"/>
    </location>
</feature>
<feature type="splice variant" id="VSP_022262" description="In isoform 2." evidence="5">
    <original>MIACRMSSQDLSISAKL</original>
    <variation>TPSSCRTKI</variation>
    <location>
        <begin position="1"/>
        <end position="17"/>
    </location>
</feature>
<gene>
    <name type="primary">Slc25a18</name>
    <name type="synonym">Gc2</name>
</gene>
<dbReference type="EMBL" id="BC116828">
    <property type="protein sequence ID" value="AAI16829.2"/>
    <property type="molecule type" value="mRNA"/>
</dbReference>
<dbReference type="EMBL" id="BC137603">
    <property type="protein sequence ID" value="AAI37604.1"/>
    <property type="molecule type" value="mRNA"/>
</dbReference>
<dbReference type="EMBL" id="AK005250">
    <property type="status" value="NOT_ANNOTATED_CDS"/>
    <property type="molecule type" value="mRNA"/>
</dbReference>
<dbReference type="CCDS" id="CCDS39614.1">
    <molecule id="Q9DB41-1"/>
</dbReference>
<dbReference type="RefSeq" id="NP_001074517.1">
    <molecule id="Q9DB41-1"/>
    <property type="nucleotide sequence ID" value="NM_001081048.3"/>
</dbReference>
<dbReference type="RefSeq" id="NP_001404664.1">
    <molecule id="Q9DB41-1"/>
    <property type="nucleotide sequence ID" value="NM_001417735.1"/>
</dbReference>
<dbReference type="RefSeq" id="NP_001404665.1">
    <molecule id="Q9DB41-1"/>
    <property type="nucleotide sequence ID" value="NM_001417736.1"/>
</dbReference>
<dbReference type="RefSeq" id="XP_006506712.1">
    <molecule id="Q9DB41-1"/>
    <property type="nucleotide sequence ID" value="XM_006506649.4"/>
</dbReference>
<dbReference type="RefSeq" id="XP_006506713.1">
    <property type="nucleotide sequence ID" value="XM_006506650.3"/>
</dbReference>
<dbReference type="SMR" id="Q9DB41"/>
<dbReference type="BioGRID" id="214940">
    <property type="interactions" value="2"/>
</dbReference>
<dbReference type="FunCoup" id="Q9DB41">
    <property type="interactions" value="98"/>
</dbReference>
<dbReference type="IntAct" id="Q9DB41">
    <property type="interactions" value="2"/>
</dbReference>
<dbReference type="MINT" id="Q9DB41"/>
<dbReference type="STRING" id="10090.ENSMUSP00000108302"/>
<dbReference type="GlyGen" id="Q9DB41">
    <property type="glycosylation" value="1 site, 1 N-linked glycan (1 site)"/>
</dbReference>
<dbReference type="iPTMnet" id="Q9DB41"/>
<dbReference type="PhosphoSitePlus" id="Q9DB41"/>
<dbReference type="SwissPalm" id="Q9DB41"/>
<dbReference type="jPOST" id="Q9DB41"/>
<dbReference type="PaxDb" id="10090-ENSMUSP00000108302"/>
<dbReference type="PeptideAtlas" id="Q9DB41"/>
<dbReference type="ProteomicsDB" id="268876">
    <molecule id="Q9DB41-1"/>
</dbReference>
<dbReference type="ProteomicsDB" id="268877">
    <molecule id="Q9DB41-2"/>
</dbReference>
<dbReference type="Antibodypedia" id="22673">
    <property type="antibodies" value="69 antibodies from 17 providers"/>
</dbReference>
<dbReference type="DNASU" id="71803"/>
<dbReference type="Ensembl" id="ENSMUST00000112682.4">
    <molecule id="Q9DB41-1"/>
    <property type="protein sequence ID" value="ENSMUSP00000108302.3"/>
    <property type="gene ID" value="ENSMUSG00000004902.8"/>
</dbReference>
<dbReference type="GeneID" id="71803"/>
<dbReference type="KEGG" id="mmu:71803"/>
<dbReference type="UCSC" id="uc009dnq.1">
    <molecule id="Q9DB41-1"/>
    <property type="organism name" value="mouse"/>
</dbReference>
<dbReference type="AGR" id="MGI:1919053"/>
<dbReference type="CTD" id="83733"/>
<dbReference type="MGI" id="MGI:1919053">
    <property type="gene designation" value="Slc25a18"/>
</dbReference>
<dbReference type="VEuPathDB" id="HostDB:ENSMUSG00000004902"/>
<dbReference type="eggNOG" id="KOG0750">
    <property type="taxonomic scope" value="Eukaryota"/>
</dbReference>
<dbReference type="GeneTree" id="ENSGT00940000162050"/>
<dbReference type="HOGENOM" id="CLU_015166_3_4_1"/>
<dbReference type="InParanoid" id="Q9DB41"/>
<dbReference type="OMA" id="CTRRIMR"/>
<dbReference type="OrthoDB" id="2382881at2759"/>
<dbReference type="PhylomeDB" id="Q9DB41"/>
<dbReference type="TreeFam" id="TF313209"/>
<dbReference type="Reactome" id="R-MMU-428643">
    <property type="pathway name" value="Organic anion transporters"/>
</dbReference>
<dbReference type="Reactome" id="R-MMU-9856872">
    <property type="pathway name" value="Malate-aspartate shuttle"/>
</dbReference>
<dbReference type="BioGRID-ORCS" id="71803">
    <property type="hits" value="4 hits in 76 CRISPR screens"/>
</dbReference>
<dbReference type="CD-CODE" id="CE726F99">
    <property type="entry name" value="Postsynaptic density"/>
</dbReference>
<dbReference type="PRO" id="PR:Q9DB41"/>
<dbReference type="Proteomes" id="UP000000589">
    <property type="component" value="Chromosome 6"/>
</dbReference>
<dbReference type="RNAct" id="Q9DB41">
    <property type="molecule type" value="protein"/>
</dbReference>
<dbReference type="Bgee" id="ENSMUSG00000004902">
    <property type="expression patterns" value="Expressed in lumbar subsegment of spinal cord and 86 other cell types or tissues"/>
</dbReference>
<dbReference type="GO" id="GO:0005743">
    <property type="term" value="C:mitochondrial inner membrane"/>
    <property type="evidence" value="ECO:0000314"/>
    <property type="project" value="UniProtKB"/>
</dbReference>
<dbReference type="GO" id="GO:0005280">
    <property type="term" value="F:amino acid:proton symporter activity"/>
    <property type="evidence" value="ECO:0000250"/>
    <property type="project" value="UniProtKB"/>
</dbReference>
<dbReference type="GO" id="GO:0015813">
    <property type="term" value="P:L-glutamate transmembrane transport"/>
    <property type="evidence" value="ECO:0000250"/>
    <property type="project" value="UniProtKB"/>
</dbReference>
<dbReference type="FunFam" id="1.50.40.10:FF:000026">
    <property type="entry name" value="Putative mitochondrial glutamate carrier 2"/>
    <property type="match status" value="1"/>
</dbReference>
<dbReference type="Gene3D" id="1.50.40.10">
    <property type="entry name" value="Mitochondrial carrier domain"/>
    <property type="match status" value="1"/>
</dbReference>
<dbReference type="InterPro" id="IPR002067">
    <property type="entry name" value="Mit_carrier"/>
</dbReference>
<dbReference type="InterPro" id="IPR051028">
    <property type="entry name" value="Mito_Solute_Carrier"/>
</dbReference>
<dbReference type="InterPro" id="IPR018108">
    <property type="entry name" value="Mitochondrial_sb/sol_carrier"/>
</dbReference>
<dbReference type="InterPro" id="IPR023395">
    <property type="entry name" value="Mt_carrier_dom_sf"/>
</dbReference>
<dbReference type="PANTHER" id="PTHR45678">
    <property type="entry name" value="MITOCHONDRIAL 2-OXODICARBOXYLATE CARRIER 1-RELATED"/>
    <property type="match status" value="1"/>
</dbReference>
<dbReference type="PANTHER" id="PTHR45678:SF11">
    <property type="entry name" value="MITOCHONDRIAL GLUTAMATE CARRIER 2"/>
    <property type="match status" value="1"/>
</dbReference>
<dbReference type="Pfam" id="PF00153">
    <property type="entry name" value="Mito_carr"/>
    <property type="match status" value="3"/>
</dbReference>
<dbReference type="PRINTS" id="PR00926">
    <property type="entry name" value="MITOCARRIER"/>
</dbReference>
<dbReference type="SUPFAM" id="SSF103506">
    <property type="entry name" value="Mitochondrial carrier"/>
    <property type="match status" value="1"/>
</dbReference>
<dbReference type="PROSITE" id="PS50920">
    <property type="entry name" value="SOLCAR"/>
    <property type="match status" value="3"/>
</dbReference>
<organism>
    <name type="scientific">Mus musculus</name>
    <name type="common">Mouse</name>
    <dbReference type="NCBI Taxonomy" id="10090"/>
    <lineage>
        <taxon>Eukaryota</taxon>
        <taxon>Metazoa</taxon>
        <taxon>Chordata</taxon>
        <taxon>Craniata</taxon>
        <taxon>Vertebrata</taxon>
        <taxon>Euteleostomi</taxon>
        <taxon>Mammalia</taxon>
        <taxon>Eutheria</taxon>
        <taxon>Euarchontoglires</taxon>
        <taxon>Glires</taxon>
        <taxon>Rodentia</taxon>
        <taxon>Myomorpha</taxon>
        <taxon>Muroidea</taxon>
        <taxon>Muridae</taxon>
        <taxon>Murinae</taxon>
        <taxon>Mus</taxon>
        <taxon>Mus</taxon>
    </lineage>
</organism>
<reference key="1">
    <citation type="journal article" date="2004" name="Genome Res.">
        <title>The status, quality, and expansion of the NIH full-length cDNA project: the Mammalian Gene Collection (MGC).</title>
        <authorList>
            <consortium name="The MGC Project Team"/>
        </authorList>
    </citation>
    <scope>NUCLEOTIDE SEQUENCE [LARGE SCALE MRNA] (ISOFORM 1)</scope>
    <source>
        <tissue>Brain</tissue>
    </source>
</reference>
<reference key="2">
    <citation type="journal article" date="2005" name="Science">
        <title>The transcriptional landscape of the mammalian genome.</title>
        <authorList>
            <person name="Carninci P."/>
            <person name="Kasukawa T."/>
            <person name="Katayama S."/>
            <person name="Gough J."/>
            <person name="Frith M.C."/>
            <person name="Maeda N."/>
            <person name="Oyama R."/>
            <person name="Ravasi T."/>
            <person name="Lenhard B."/>
            <person name="Wells C."/>
            <person name="Kodzius R."/>
            <person name="Shimokawa K."/>
            <person name="Bajic V.B."/>
            <person name="Brenner S.E."/>
            <person name="Batalov S."/>
            <person name="Forrest A.R."/>
            <person name="Zavolan M."/>
            <person name="Davis M.J."/>
            <person name="Wilming L.G."/>
            <person name="Aidinis V."/>
            <person name="Allen J.E."/>
            <person name="Ambesi-Impiombato A."/>
            <person name="Apweiler R."/>
            <person name="Aturaliya R.N."/>
            <person name="Bailey T.L."/>
            <person name="Bansal M."/>
            <person name="Baxter L."/>
            <person name="Beisel K.W."/>
            <person name="Bersano T."/>
            <person name="Bono H."/>
            <person name="Chalk A.M."/>
            <person name="Chiu K.P."/>
            <person name="Choudhary V."/>
            <person name="Christoffels A."/>
            <person name="Clutterbuck D.R."/>
            <person name="Crowe M.L."/>
            <person name="Dalla E."/>
            <person name="Dalrymple B.P."/>
            <person name="de Bono B."/>
            <person name="Della Gatta G."/>
            <person name="di Bernardo D."/>
            <person name="Down T."/>
            <person name="Engstrom P."/>
            <person name="Fagiolini M."/>
            <person name="Faulkner G."/>
            <person name="Fletcher C.F."/>
            <person name="Fukushima T."/>
            <person name="Furuno M."/>
            <person name="Futaki S."/>
            <person name="Gariboldi M."/>
            <person name="Georgii-Hemming P."/>
            <person name="Gingeras T.R."/>
            <person name="Gojobori T."/>
            <person name="Green R.E."/>
            <person name="Gustincich S."/>
            <person name="Harbers M."/>
            <person name="Hayashi Y."/>
            <person name="Hensch T.K."/>
            <person name="Hirokawa N."/>
            <person name="Hill D."/>
            <person name="Huminiecki L."/>
            <person name="Iacono M."/>
            <person name="Ikeo K."/>
            <person name="Iwama A."/>
            <person name="Ishikawa T."/>
            <person name="Jakt M."/>
            <person name="Kanapin A."/>
            <person name="Katoh M."/>
            <person name="Kawasawa Y."/>
            <person name="Kelso J."/>
            <person name="Kitamura H."/>
            <person name="Kitano H."/>
            <person name="Kollias G."/>
            <person name="Krishnan S.P."/>
            <person name="Kruger A."/>
            <person name="Kummerfeld S.K."/>
            <person name="Kurochkin I.V."/>
            <person name="Lareau L.F."/>
            <person name="Lazarevic D."/>
            <person name="Lipovich L."/>
            <person name="Liu J."/>
            <person name="Liuni S."/>
            <person name="McWilliam S."/>
            <person name="Madan Babu M."/>
            <person name="Madera M."/>
            <person name="Marchionni L."/>
            <person name="Matsuda H."/>
            <person name="Matsuzawa S."/>
            <person name="Miki H."/>
            <person name="Mignone F."/>
            <person name="Miyake S."/>
            <person name="Morris K."/>
            <person name="Mottagui-Tabar S."/>
            <person name="Mulder N."/>
            <person name="Nakano N."/>
            <person name="Nakauchi H."/>
            <person name="Ng P."/>
            <person name="Nilsson R."/>
            <person name="Nishiguchi S."/>
            <person name="Nishikawa S."/>
            <person name="Nori F."/>
            <person name="Ohara O."/>
            <person name="Okazaki Y."/>
            <person name="Orlando V."/>
            <person name="Pang K.C."/>
            <person name="Pavan W.J."/>
            <person name="Pavesi G."/>
            <person name="Pesole G."/>
            <person name="Petrovsky N."/>
            <person name="Piazza S."/>
            <person name="Reed J."/>
            <person name="Reid J.F."/>
            <person name="Ring B.Z."/>
            <person name="Ringwald M."/>
            <person name="Rost B."/>
            <person name="Ruan Y."/>
            <person name="Salzberg S.L."/>
            <person name="Sandelin A."/>
            <person name="Schneider C."/>
            <person name="Schoenbach C."/>
            <person name="Sekiguchi K."/>
            <person name="Semple C.A."/>
            <person name="Seno S."/>
            <person name="Sessa L."/>
            <person name="Sheng Y."/>
            <person name="Shibata Y."/>
            <person name="Shimada H."/>
            <person name="Shimada K."/>
            <person name="Silva D."/>
            <person name="Sinclair B."/>
            <person name="Sperling S."/>
            <person name="Stupka E."/>
            <person name="Sugiura K."/>
            <person name="Sultana R."/>
            <person name="Takenaka Y."/>
            <person name="Taki K."/>
            <person name="Tammoja K."/>
            <person name="Tan S.L."/>
            <person name="Tang S."/>
            <person name="Taylor M.S."/>
            <person name="Tegner J."/>
            <person name="Teichmann S.A."/>
            <person name="Ueda H.R."/>
            <person name="van Nimwegen E."/>
            <person name="Verardo R."/>
            <person name="Wei C.L."/>
            <person name="Yagi K."/>
            <person name="Yamanishi H."/>
            <person name="Zabarovsky E."/>
            <person name="Zhu S."/>
            <person name="Zimmer A."/>
            <person name="Hide W."/>
            <person name="Bult C."/>
            <person name="Grimmond S.M."/>
            <person name="Teasdale R.D."/>
            <person name="Liu E.T."/>
            <person name="Brusic V."/>
            <person name="Quackenbush J."/>
            <person name="Wahlestedt C."/>
            <person name="Mattick J.S."/>
            <person name="Hume D.A."/>
            <person name="Kai C."/>
            <person name="Sasaki D."/>
            <person name="Tomaru Y."/>
            <person name="Fukuda S."/>
            <person name="Kanamori-Katayama M."/>
            <person name="Suzuki M."/>
            <person name="Aoki J."/>
            <person name="Arakawa T."/>
            <person name="Iida J."/>
            <person name="Imamura K."/>
            <person name="Itoh M."/>
            <person name="Kato T."/>
            <person name="Kawaji H."/>
            <person name="Kawagashira N."/>
            <person name="Kawashima T."/>
            <person name="Kojima M."/>
            <person name="Kondo S."/>
            <person name="Konno H."/>
            <person name="Nakano K."/>
            <person name="Ninomiya N."/>
            <person name="Nishio T."/>
            <person name="Okada M."/>
            <person name="Plessy C."/>
            <person name="Shibata K."/>
            <person name="Shiraki T."/>
            <person name="Suzuki S."/>
            <person name="Tagami M."/>
            <person name="Waki K."/>
            <person name="Watahiki A."/>
            <person name="Okamura-Oho Y."/>
            <person name="Suzuki H."/>
            <person name="Kawai J."/>
            <person name="Hayashizaki Y."/>
        </authorList>
    </citation>
    <scope>PARTIAL NUCLEOTIDE SEQUENCE [LARGE SCALE MRNA] (ISOFORM 2)</scope>
    <source>
        <strain>C57BL/6J</strain>
        <tissue>Cerebellum</tissue>
    </source>
</reference>
<reference key="3">
    <citation type="journal article" date="2010" name="Cell">
        <title>A tissue-specific atlas of mouse protein phosphorylation and expression.</title>
        <authorList>
            <person name="Huttlin E.L."/>
            <person name="Jedrychowski M.P."/>
            <person name="Elias J.E."/>
            <person name="Goswami T."/>
            <person name="Rad R."/>
            <person name="Beausoleil S.A."/>
            <person name="Villen J."/>
            <person name="Haas W."/>
            <person name="Sowa M.E."/>
            <person name="Gygi S.P."/>
        </authorList>
    </citation>
    <scope>IDENTIFICATION BY MASS SPECTROMETRY [LARGE SCALE ANALYSIS]</scope>
    <source>
        <tissue>Brain</tissue>
        <tissue>Testis</tissue>
    </source>
</reference>
<reference key="4">
    <citation type="journal article" date="2003" name="J. Biol. Chem.">
        <title>Proteomic analysis of the mouse liver mitochondrial inner membrane.</title>
        <authorList>
            <person name="Da Cruz S."/>
            <person name="Xenarios I."/>
            <person name="Langridge J."/>
            <person name="Vilbois F."/>
            <person name="Parone P.A."/>
            <person name="Martinou J.-C."/>
        </authorList>
    </citation>
    <scope>SUBCELLULAR LOCATION</scope>
</reference>
<accession>Q9DB41</accession>
<accession>B2RPU3</accession>
<accession>Q14AI5</accession>
<protein>
    <recommendedName>
        <fullName>Mitochondrial glutamate carrier 2</fullName>
        <shortName>GC-2</shortName>
    </recommendedName>
    <alternativeName>
        <fullName>Glutamate/H(+) symporter 2</fullName>
    </alternativeName>
    <alternativeName>
        <fullName>Solute carrier family 25 member 18</fullName>
    </alternativeName>
</protein>
<sequence>MIACRMSSQDLSISAKLINGGIAGLVGVTCVFPIDLAKTRLQNQQGKDVYRGMTDCLMKTARAEGFLGMYRGAAVNLTLVTPEKAIKLAANDFLRQLLMQDGTQRNLKMEMLAGCGAGICQVVITCPMEMLKIQLQDAGRLAVCHQASASATPTSRPYSTGSTSTHRRPSATLIARELLRTQGLSGLYRGLGATLLRDIPFSIIYFPLFANLNQLGVSELTGKASFTHSFVAGCTAGSVAAVAVTPLDVLKTRIQTLKKGLGEDTYSGVTDCARKLWTQEGPAAFMKGAGCRALVIAPLFGIAQGVYFIGIGERILKCFE</sequence>